<keyword id="KW-0067">ATP-binding</keyword>
<keyword id="KW-0963">Cytoplasm</keyword>
<keyword id="KW-1015">Disulfide bond</keyword>
<keyword id="KW-0547">Nucleotide-binding</keyword>
<keyword id="KW-0694">RNA-binding</keyword>
<keyword id="KW-0808">Transferase</keyword>
<keyword id="KW-0819">tRNA processing</keyword>
<keyword id="KW-0820">tRNA-binding</keyword>
<proteinExistence type="inferred from homology"/>
<dbReference type="EC" id="2.8.1.13" evidence="1"/>
<dbReference type="EMBL" id="AP006628">
    <property type="protein sequence ID" value="BAD04210.1"/>
    <property type="molecule type" value="Genomic_DNA"/>
</dbReference>
<dbReference type="SMR" id="Q6YR90"/>
<dbReference type="STRING" id="262768.PAM_125"/>
<dbReference type="KEGG" id="poy:PAM_125"/>
<dbReference type="eggNOG" id="COG0482">
    <property type="taxonomic scope" value="Bacteria"/>
</dbReference>
<dbReference type="HOGENOM" id="CLU_035188_1_0_14"/>
<dbReference type="BioCyc" id="OYEL262768:G1G26-157-MONOMER"/>
<dbReference type="Proteomes" id="UP000002523">
    <property type="component" value="Chromosome"/>
</dbReference>
<dbReference type="GO" id="GO:0005737">
    <property type="term" value="C:cytoplasm"/>
    <property type="evidence" value="ECO:0007669"/>
    <property type="project" value="UniProtKB-SubCell"/>
</dbReference>
<dbReference type="GO" id="GO:0005524">
    <property type="term" value="F:ATP binding"/>
    <property type="evidence" value="ECO:0007669"/>
    <property type="project" value="UniProtKB-KW"/>
</dbReference>
<dbReference type="GO" id="GO:0000049">
    <property type="term" value="F:tRNA binding"/>
    <property type="evidence" value="ECO:0007669"/>
    <property type="project" value="UniProtKB-KW"/>
</dbReference>
<dbReference type="GO" id="GO:0103016">
    <property type="term" value="F:tRNA-uridine 2-sulfurtransferase activity"/>
    <property type="evidence" value="ECO:0007669"/>
    <property type="project" value="UniProtKB-EC"/>
</dbReference>
<dbReference type="GO" id="GO:0002143">
    <property type="term" value="P:tRNA wobble position uridine thiolation"/>
    <property type="evidence" value="ECO:0007669"/>
    <property type="project" value="TreeGrafter"/>
</dbReference>
<dbReference type="CDD" id="cd01998">
    <property type="entry name" value="MnmA_TRMU-like"/>
    <property type="match status" value="1"/>
</dbReference>
<dbReference type="FunFam" id="3.40.50.620:FF:000104">
    <property type="entry name" value="Mitochondrial tRNA-specific 2-thiouridylase 1"/>
    <property type="match status" value="1"/>
</dbReference>
<dbReference type="FunFam" id="2.30.30.280:FF:000001">
    <property type="entry name" value="tRNA-specific 2-thiouridylase MnmA"/>
    <property type="match status" value="1"/>
</dbReference>
<dbReference type="Gene3D" id="2.30.30.280">
    <property type="entry name" value="Adenine nucleotide alpha hydrolases-like domains"/>
    <property type="match status" value="1"/>
</dbReference>
<dbReference type="Gene3D" id="3.40.50.620">
    <property type="entry name" value="HUPs"/>
    <property type="match status" value="1"/>
</dbReference>
<dbReference type="Gene3D" id="2.40.30.10">
    <property type="entry name" value="Translation factors"/>
    <property type="match status" value="1"/>
</dbReference>
<dbReference type="HAMAP" id="MF_00144">
    <property type="entry name" value="tRNA_thiouridyl_MnmA"/>
    <property type="match status" value="1"/>
</dbReference>
<dbReference type="InterPro" id="IPR004506">
    <property type="entry name" value="MnmA-like"/>
</dbReference>
<dbReference type="InterPro" id="IPR046885">
    <property type="entry name" value="MnmA-like_C"/>
</dbReference>
<dbReference type="InterPro" id="IPR046884">
    <property type="entry name" value="MnmA-like_central"/>
</dbReference>
<dbReference type="InterPro" id="IPR023382">
    <property type="entry name" value="MnmA-like_central_sf"/>
</dbReference>
<dbReference type="InterPro" id="IPR014729">
    <property type="entry name" value="Rossmann-like_a/b/a_fold"/>
</dbReference>
<dbReference type="NCBIfam" id="NF001138">
    <property type="entry name" value="PRK00143.1"/>
    <property type="match status" value="1"/>
</dbReference>
<dbReference type="NCBIfam" id="TIGR00420">
    <property type="entry name" value="trmU"/>
    <property type="match status" value="1"/>
</dbReference>
<dbReference type="PANTHER" id="PTHR11933:SF5">
    <property type="entry name" value="MITOCHONDRIAL TRNA-SPECIFIC 2-THIOURIDYLASE 1"/>
    <property type="match status" value="1"/>
</dbReference>
<dbReference type="PANTHER" id="PTHR11933">
    <property type="entry name" value="TRNA 5-METHYLAMINOMETHYL-2-THIOURIDYLATE -METHYLTRANSFERASE"/>
    <property type="match status" value="1"/>
</dbReference>
<dbReference type="Pfam" id="PF03054">
    <property type="entry name" value="tRNA_Me_trans"/>
    <property type="match status" value="1"/>
</dbReference>
<dbReference type="Pfam" id="PF20258">
    <property type="entry name" value="tRNA_Me_trans_C"/>
    <property type="match status" value="1"/>
</dbReference>
<dbReference type="Pfam" id="PF20259">
    <property type="entry name" value="tRNA_Me_trans_M"/>
    <property type="match status" value="1"/>
</dbReference>
<dbReference type="SUPFAM" id="SSF52402">
    <property type="entry name" value="Adenine nucleotide alpha hydrolases-like"/>
    <property type="match status" value="1"/>
</dbReference>
<evidence type="ECO:0000255" key="1">
    <source>
        <dbReference type="HAMAP-Rule" id="MF_00144"/>
    </source>
</evidence>
<reference key="1">
    <citation type="journal article" date="2004" name="Nat. Genet.">
        <title>Reductive evolution suggested from the complete genome sequence of a plant-pathogenic phytoplasma.</title>
        <authorList>
            <person name="Oshima K."/>
            <person name="Kakizawa S."/>
            <person name="Nishigawa H."/>
            <person name="Jung H.-Y."/>
            <person name="Wei W."/>
            <person name="Suzuki S."/>
            <person name="Arashida R."/>
            <person name="Nakata D."/>
            <person name="Miyata S."/>
            <person name="Ugaki M."/>
            <person name="Namba S."/>
        </authorList>
    </citation>
    <scope>NUCLEOTIDE SEQUENCE [LARGE SCALE GENOMIC DNA]</scope>
    <source>
        <strain>OY-M</strain>
    </source>
</reference>
<organism>
    <name type="scientific">Onion yellows phytoplasma (strain OY-M)</name>
    <dbReference type="NCBI Taxonomy" id="262768"/>
    <lineage>
        <taxon>Bacteria</taxon>
        <taxon>Bacillati</taxon>
        <taxon>Mycoplasmatota</taxon>
        <taxon>Mollicutes</taxon>
        <taxon>Acholeplasmatales</taxon>
        <taxon>Acholeplasmataceae</taxon>
        <taxon>Candidatus Phytoplasma</taxon>
        <taxon>16SrI (Aster yellows group)</taxon>
    </lineage>
</organism>
<sequence length="378" mass="43142">MTKVVVGLSGGVDSAVAAFLLKKQGYLVEAVFMRNWDSNLNFDIQGNPTLNDICSQELDYKDSLKVSEQLGIKLHRVDFIEEYWQKVFMSFIKAFENNLTPNPDILCNNEIKFRAFIEYATTKLAPQYIAMGHYANIIYETSSDQKLVPRLACAVDQNKDQTYFLSQLTTKQLQNILFPLGNLTKQEVRQIALENNLINATKKDSTGICFIGERNFFQFLSNYLPAQKGDIKTLDGTFLAHHKGVMYYTIGQRKNLGLGDVPSQKPWFVVGKHLPTNTLYVEQGSTHPYLYSDKALIGDIVWRGKKTNLHLQAKMRYRQPNQDVILTWLDQNNLEIHYPQTIKAVTPGQICAFYDKNICCGAGVIKEVYFQGTKRLYT</sequence>
<feature type="chain" id="PRO_1000009549" description="tRNA-specific 2-thiouridylase MnmA">
    <location>
        <begin position="1"/>
        <end position="378"/>
    </location>
</feature>
<feature type="region of interest" description="Interaction with target base in tRNA" evidence="1">
    <location>
        <begin position="102"/>
        <end position="104"/>
    </location>
</feature>
<feature type="region of interest" description="Interaction with tRNA" evidence="1">
    <location>
        <begin position="159"/>
        <end position="161"/>
    </location>
</feature>
<feature type="region of interest" description="Interaction with tRNA" evidence="1">
    <location>
        <begin position="316"/>
        <end position="317"/>
    </location>
</feature>
<feature type="active site" description="Nucleophile" evidence="1">
    <location>
        <position position="107"/>
    </location>
</feature>
<feature type="active site" description="Cysteine persulfide intermediate" evidence="1">
    <location>
        <position position="209"/>
    </location>
</feature>
<feature type="binding site" evidence="1">
    <location>
        <begin position="7"/>
        <end position="14"/>
    </location>
    <ligand>
        <name>ATP</name>
        <dbReference type="ChEBI" id="CHEBI:30616"/>
    </ligand>
</feature>
<feature type="binding site" evidence="1">
    <location>
        <position position="33"/>
    </location>
    <ligand>
        <name>ATP</name>
        <dbReference type="ChEBI" id="CHEBI:30616"/>
    </ligand>
</feature>
<feature type="binding site" evidence="1">
    <location>
        <position position="132"/>
    </location>
    <ligand>
        <name>ATP</name>
        <dbReference type="ChEBI" id="CHEBI:30616"/>
    </ligand>
</feature>
<feature type="site" description="Interaction with tRNA" evidence="1">
    <location>
        <position position="133"/>
    </location>
</feature>
<feature type="site" description="Interaction with tRNA" evidence="1">
    <location>
        <position position="349"/>
    </location>
</feature>
<feature type="disulfide bond" description="Alternate" evidence="1">
    <location>
        <begin position="107"/>
        <end position="209"/>
    </location>
</feature>
<name>MNMA_ONYPE</name>
<accession>Q6YR90</accession>
<comment type="function">
    <text evidence="1">Catalyzes the 2-thiolation of uridine at the wobble position (U34) of tRNA, leading to the formation of s(2)U34.</text>
</comment>
<comment type="catalytic activity">
    <reaction evidence="1">
        <text>S-sulfanyl-L-cysteinyl-[protein] + uridine(34) in tRNA + AH2 + ATP = 2-thiouridine(34) in tRNA + L-cysteinyl-[protein] + A + AMP + diphosphate + H(+)</text>
        <dbReference type="Rhea" id="RHEA:47032"/>
        <dbReference type="Rhea" id="RHEA-COMP:10131"/>
        <dbReference type="Rhea" id="RHEA-COMP:11726"/>
        <dbReference type="Rhea" id="RHEA-COMP:11727"/>
        <dbReference type="Rhea" id="RHEA-COMP:11728"/>
        <dbReference type="ChEBI" id="CHEBI:13193"/>
        <dbReference type="ChEBI" id="CHEBI:15378"/>
        <dbReference type="ChEBI" id="CHEBI:17499"/>
        <dbReference type="ChEBI" id="CHEBI:29950"/>
        <dbReference type="ChEBI" id="CHEBI:30616"/>
        <dbReference type="ChEBI" id="CHEBI:33019"/>
        <dbReference type="ChEBI" id="CHEBI:61963"/>
        <dbReference type="ChEBI" id="CHEBI:65315"/>
        <dbReference type="ChEBI" id="CHEBI:87170"/>
        <dbReference type="ChEBI" id="CHEBI:456215"/>
        <dbReference type="EC" id="2.8.1.13"/>
    </reaction>
</comment>
<comment type="subcellular location">
    <subcellularLocation>
        <location evidence="1">Cytoplasm</location>
    </subcellularLocation>
</comment>
<comment type="similarity">
    <text evidence="1">Belongs to the MnmA/TRMU family.</text>
</comment>
<protein>
    <recommendedName>
        <fullName evidence="1">tRNA-specific 2-thiouridylase MnmA</fullName>
        <ecNumber evidence="1">2.8.1.13</ecNumber>
    </recommendedName>
</protein>
<gene>
    <name evidence="1" type="primary">mnmA</name>
    <name type="synonym">trmU</name>
    <name type="ordered locus">PAM_125</name>
</gene>